<sequence>MPINKSEKPESCDNVKVVVRCRPLNEREKSMCYKQAVSVDEMRGTITVHKTDSSNEPPKTFTFDTVFGPESKQLDVYNLTARPIIDSVLEGYNGTIFAYGQTGTGKTFTMEGVRAVPELRGIIPNSFAHIFGHIAKAEGDTRFLVRVSYLEIYNEEVRDLLGKDQTQRLEVKERPDVGVYIKDLSAYVVNNADDMDRIMTLGHKNRSVGATNMNEHSSRSHAIFTITIECSEKGIDGNMHVRMGKLHLVDLAGSERQAKTGATGQRLKEATKINLSLSTLGNVISALVDGKSTHVPYRNSKLTRLLQDSLGGNSKTMMCANIGPADYNYDETISTLRYANRAKNIKNKARINEDPKDALLRQFQKEIEELKKKLEEGEEISGSDISGSEEDDDEEGEVGEDGEKRKKRRDQAGKKKVSPDKMIEMQAKIDEERKALETKLDMEEEERNKARAELEKREKDLLKAQQEHQSLLEKLSALEKKVIVGGVDLLAKAEEQEKLLEESNMELEERRKRAEQLRRELEEKEQERLDIEEKYTSLQEEAQGKTKKLKKVWTMLMAAKSEMADLQQEHQREIEGLLENIRQLSRELRLQMLIIDNFIPRDYQEMIENYVHWNEDIGEWQLKCVAYTGNNMRKQTPVPDKKEKDPFEVDLSHVYLAYTEESLRQSLMKLERPRTSKGKARPKTGRRKRSAKPETVIDSLLQ</sequence>
<proteinExistence type="evidence at transcript level"/>
<reference key="1">
    <citation type="submission" date="2005-06" db="EMBL/GenBank/DDBJ databases">
        <title>DNA sequences of macaque genes expressed in brain or testis and its evolutionary implications.</title>
        <authorList>
            <consortium name="International consortium for macaque cDNA sequencing and analysis"/>
        </authorList>
    </citation>
    <scope>NUCLEOTIDE SEQUENCE [LARGE SCALE MRNA]</scope>
    <source>
        <tissue>Testis</tissue>
    </source>
</reference>
<organism>
    <name type="scientific">Macaca fascicularis</name>
    <name type="common">Crab-eating macaque</name>
    <name type="synonym">Cynomolgus monkey</name>
    <dbReference type="NCBI Taxonomy" id="9541"/>
    <lineage>
        <taxon>Eukaryota</taxon>
        <taxon>Metazoa</taxon>
        <taxon>Chordata</taxon>
        <taxon>Craniata</taxon>
        <taxon>Vertebrata</taxon>
        <taxon>Euteleostomi</taxon>
        <taxon>Mammalia</taxon>
        <taxon>Eutheria</taxon>
        <taxon>Euarchontoglires</taxon>
        <taxon>Primates</taxon>
        <taxon>Haplorrhini</taxon>
        <taxon>Catarrhini</taxon>
        <taxon>Cercopithecidae</taxon>
        <taxon>Cercopithecinae</taxon>
        <taxon>Macaca</taxon>
    </lineage>
</organism>
<evidence type="ECO:0000250" key="1">
    <source>
        <dbReference type="UniProtKB" id="P28741"/>
    </source>
</evidence>
<evidence type="ECO:0000250" key="2">
    <source>
        <dbReference type="UniProtKB" id="Q9Y496"/>
    </source>
</evidence>
<evidence type="ECO:0000255" key="3"/>
<evidence type="ECO:0000255" key="4">
    <source>
        <dbReference type="PROSITE-ProRule" id="PRU00283"/>
    </source>
</evidence>
<evidence type="ECO:0000256" key="5">
    <source>
        <dbReference type="SAM" id="MobiDB-lite"/>
    </source>
</evidence>
<evidence type="ECO:0000305" key="6"/>
<dbReference type="EMBL" id="AB169362">
    <property type="protein sequence ID" value="BAE01447.1"/>
    <property type="molecule type" value="mRNA"/>
</dbReference>
<dbReference type="RefSeq" id="NP_001306382.1">
    <property type="nucleotide sequence ID" value="NM_001319453.1"/>
</dbReference>
<dbReference type="RefSeq" id="XP_045250152.1">
    <property type="nucleotide sequence ID" value="XM_045394217.2"/>
</dbReference>
<dbReference type="SMR" id="Q4R628"/>
<dbReference type="STRING" id="9541.ENSMFAP00000019774"/>
<dbReference type="GeneID" id="101865142"/>
<dbReference type="eggNOG" id="KOG4280">
    <property type="taxonomic scope" value="Eukaryota"/>
</dbReference>
<dbReference type="OrthoDB" id="3176171at2759"/>
<dbReference type="Proteomes" id="UP000233100">
    <property type="component" value="Unplaced"/>
</dbReference>
<dbReference type="GO" id="GO:0005814">
    <property type="term" value="C:centriole"/>
    <property type="evidence" value="ECO:0000250"/>
    <property type="project" value="UniProtKB"/>
</dbReference>
<dbReference type="GO" id="GO:0005929">
    <property type="term" value="C:cilium"/>
    <property type="evidence" value="ECO:0000250"/>
    <property type="project" value="UniProtKB"/>
</dbReference>
<dbReference type="GO" id="GO:0005737">
    <property type="term" value="C:cytoplasm"/>
    <property type="evidence" value="ECO:0007669"/>
    <property type="project" value="UniProtKB-KW"/>
</dbReference>
<dbReference type="GO" id="GO:0005874">
    <property type="term" value="C:microtubule"/>
    <property type="evidence" value="ECO:0007669"/>
    <property type="project" value="UniProtKB-KW"/>
</dbReference>
<dbReference type="GO" id="GO:0005524">
    <property type="term" value="F:ATP binding"/>
    <property type="evidence" value="ECO:0007669"/>
    <property type="project" value="UniProtKB-KW"/>
</dbReference>
<dbReference type="GO" id="GO:0008017">
    <property type="term" value="F:microtubule binding"/>
    <property type="evidence" value="ECO:0007669"/>
    <property type="project" value="InterPro"/>
</dbReference>
<dbReference type="GO" id="GO:0003777">
    <property type="term" value="F:microtubule motor activity"/>
    <property type="evidence" value="ECO:0007669"/>
    <property type="project" value="InterPro"/>
</dbReference>
<dbReference type="GO" id="GO:0010457">
    <property type="term" value="P:centriole-centriole cohesion"/>
    <property type="evidence" value="ECO:0000250"/>
    <property type="project" value="UniProtKB"/>
</dbReference>
<dbReference type="GO" id="GO:0060271">
    <property type="term" value="P:cilium assembly"/>
    <property type="evidence" value="ECO:0000250"/>
    <property type="project" value="UniProtKB"/>
</dbReference>
<dbReference type="GO" id="GO:0034454">
    <property type="term" value="P:microtubule anchoring at centrosome"/>
    <property type="evidence" value="ECO:0000250"/>
    <property type="project" value="UniProtKB"/>
</dbReference>
<dbReference type="GO" id="GO:0007018">
    <property type="term" value="P:microtubule-based movement"/>
    <property type="evidence" value="ECO:0007669"/>
    <property type="project" value="InterPro"/>
</dbReference>
<dbReference type="CDD" id="cd01371">
    <property type="entry name" value="KISc_KIF3"/>
    <property type="match status" value="1"/>
</dbReference>
<dbReference type="FunFam" id="3.40.850.10:FF:000028">
    <property type="entry name" value="Kinesin-like protein"/>
    <property type="match status" value="1"/>
</dbReference>
<dbReference type="Gene3D" id="3.40.850.10">
    <property type="entry name" value="Kinesin motor domain"/>
    <property type="match status" value="1"/>
</dbReference>
<dbReference type="InterPro" id="IPR027640">
    <property type="entry name" value="Kinesin-like_fam"/>
</dbReference>
<dbReference type="InterPro" id="IPR019821">
    <property type="entry name" value="Kinesin_motor_CS"/>
</dbReference>
<dbReference type="InterPro" id="IPR001752">
    <property type="entry name" value="Kinesin_motor_dom"/>
</dbReference>
<dbReference type="InterPro" id="IPR036961">
    <property type="entry name" value="Kinesin_motor_dom_sf"/>
</dbReference>
<dbReference type="InterPro" id="IPR027417">
    <property type="entry name" value="P-loop_NTPase"/>
</dbReference>
<dbReference type="PANTHER" id="PTHR47969">
    <property type="entry name" value="CHROMOSOME-ASSOCIATED KINESIN KIF4A-RELATED"/>
    <property type="match status" value="1"/>
</dbReference>
<dbReference type="PANTHER" id="PTHR47969:SF21">
    <property type="entry name" value="KINESIN-LIKE PROTEIN"/>
    <property type="match status" value="1"/>
</dbReference>
<dbReference type="Pfam" id="PF00225">
    <property type="entry name" value="Kinesin"/>
    <property type="match status" value="1"/>
</dbReference>
<dbReference type="PRINTS" id="PR00380">
    <property type="entry name" value="KINESINHEAVY"/>
</dbReference>
<dbReference type="SMART" id="SM00129">
    <property type="entry name" value="KISc"/>
    <property type="match status" value="1"/>
</dbReference>
<dbReference type="SUPFAM" id="SSF52540">
    <property type="entry name" value="P-loop containing nucleoside triphosphate hydrolases"/>
    <property type="match status" value="1"/>
</dbReference>
<dbReference type="PROSITE" id="PS00411">
    <property type="entry name" value="KINESIN_MOTOR_1"/>
    <property type="match status" value="1"/>
</dbReference>
<dbReference type="PROSITE" id="PS50067">
    <property type="entry name" value="KINESIN_MOTOR_2"/>
    <property type="match status" value="1"/>
</dbReference>
<gene>
    <name type="primary">KIF3A</name>
    <name type="ORF">QtsA-19288</name>
</gene>
<comment type="function">
    <text evidence="1">Microtubule-based anterograde translocator for membranous organelles. Plus end-directed microtubule sliding activity in vitro. Plays a role in primary cilia formation. Plays a role in centriole cohesion and subdistal appendage organization and function. Regulates the formation of the subdistal appendage via recruitment of DCTN1 to the centriole. Also required for ciliary basal feet formation and microtubule anchoring to mother centriole.</text>
</comment>
<comment type="subunit">
    <text evidence="1 2">Heterodimer of KIF3A and KIF3B (By similarity). Interacts with CIMAP3. Interacts with CLN3 (By similarity). Interacts with DCTN1 (By similarity). Interacts with FLCN. Interacts with AP3B1 (By similarity).</text>
</comment>
<comment type="subcellular location">
    <subcellularLocation>
        <location evidence="6">Cytoplasm</location>
        <location evidence="6">Cytoskeleton</location>
    </subcellularLocation>
    <subcellularLocation>
        <location evidence="1">Cell projection</location>
        <location evidence="1">Cilium</location>
    </subcellularLocation>
    <subcellularLocation>
        <location evidence="1">Cytoplasm</location>
        <location evidence="1">Cytoskeleton</location>
        <location evidence="1">Microtubule organizing center</location>
        <location evidence="1">Centrosome</location>
        <location evidence="1">Centriole</location>
    </subcellularLocation>
    <text evidence="1">Localizes to the subdistal appendage region of the centriole.</text>
</comment>
<comment type="similarity">
    <text evidence="4">Belongs to the TRAFAC class myosin-kinesin ATPase superfamily. Kinesin family. Kinesin II subfamily.</text>
</comment>
<protein>
    <recommendedName>
        <fullName>Kinesin-like protein KIF3A</fullName>
    </recommendedName>
    <alternativeName>
        <fullName>Microtubule plus end-directed kinesin motor 3A</fullName>
    </alternativeName>
</protein>
<name>KIF3A_MACFA</name>
<accession>Q4R628</accession>
<keyword id="KW-0067">ATP-binding</keyword>
<keyword id="KW-0966">Cell projection</keyword>
<keyword id="KW-0969">Cilium</keyword>
<keyword id="KW-0970">Cilium biogenesis/degradation</keyword>
<keyword id="KW-0175">Coiled coil</keyword>
<keyword id="KW-0963">Cytoplasm</keyword>
<keyword id="KW-0206">Cytoskeleton</keyword>
<keyword id="KW-0493">Microtubule</keyword>
<keyword id="KW-0505">Motor protein</keyword>
<keyword id="KW-0547">Nucleotide-binding</keyword>
<keyword id="KW-0597">Phosphoprotein</keyword>
<keyword id="KW-1185">Reference proteome</keyword>
<feature type="chain" id="PRO_0000230790" description="Kinesin-like protein KIF3A">
    <location>
        <begin position="1"/>
        <end position="702"/>
    </location>
</feature>
<feature type="domain" description="Kinesin motor" evidence="4">
    <location>
        <begin position="14"/>
        <end position="345"/>
    </location>
</feature>
<feature type="region of interest" description="Disordered" evidence="5">
    <location>
        <begin position="372"/>
        <end position="424"/>
    </location>
</feature>
<feature type="region of interest" description="Globular">
    <location>
        <begin position="600"/>
        <end position="702"/>
    </location>
</feature>
<feature type="region of interest" description="Disordered" evidence="5">
    <location>
        <begin position="667"/>
        <end position="702"/>
    </location>
</feature>
<feature type="coiled-coil region" evidence="3">
    <location>
        <begin position="355"/>
        <end position="593"/>
    </location>
</feature>
<feature type="compositionally biased region" description="Acidic residues" evidence="5">
    <location>
        <begin position="376"/>
        <end position="400"/>
    </location>
</feature>
<feature type="compositionally biased region" description="Basic and acidic residues" evidence="5">
    <location>
        <begin position="410"/>
        <end position="424"/>
    </location>
</feature>
<feature type="compositionally biased region" description="Basic residues" evidence="5">
    <location>
        <begin position="675"/>
        <end position="690"/>
    </location>
</feature>
<feature type="binding site" evidence="4">
    <location>
        <begin position="100"/>
        <end position="107"/>
    </location>
    <ligand>
        <name>ATP</name>
        <dbReference type="ChEBI" id="CHEBI:30616"/>
    </ligand>
</feature>
<feature type="modified residue" description="Phosphoserine" evidence="2">
    <location>
        <position position="690"/>
    </location>
</feature>